<comment type="function">
    <text evidence="1">Catalyzes the transfer of an acyl group from acyl-phosphate (acyl-PO(4)) to glycerol-3-phosphate (G3P) to form lysophosphatidic acid (LPA). This enzyme utilizes acyl-phosphate as fatty acyl donor, but not acyl-CoA or acyl-ACP.</text>
</comment>
<comment type="catalytic activity">
    <reaction evidence="1">
        <text>an acyl phosphate + sn-glycerol 3-phosphate = a 1-acyl-sn-glycero-3-phosphate + phosphate</text>
        <dbReference type="Rhea" id="RHEA:34075"/>
        <dbReference type="ChEBI" id="CHEBI:43474"/>
        <dbReference type="ChEBI" id="CHEBI:57597"/>
        <dbReference type="ChEBI" id="CHEBI:57970"/>
        <dbReference type="ChEBI" id="CHEBI:59918"/>
        <dbReference type="EC" id="2.3.1.275"/>
    </reaction>
</comment>
<comment type="pathway">
    <text evidence="1">Lipid metabolism; phospholipid metabolism.</text>
</comment>
<comment type="subunit">
    <text evidence="1">Probably interacts with PlsX.</text>
</comment>
<comment type="subcellular location">
    <subcellularLocation>
        <location evidence="1">Cell inner membrane</location>
        <topology evidence="1">Multi-pass membrane protein</topology>
    </subcellularLocation>
</comment>
<comment type="similarity">
    <text evidence="1">Belongs to the PlsY family.</text>
</comment>
<organism>
    <name type="scientific">Vibrio cholerae serotype O1 (strain ATCC 39541 / Classical Ogawa 395 / O395)</name>
    <dbReference type="NCBI Taxonomy" id="345073"/>
    <lineage>
        <taxon>Bacteria</taxon>
        <taxon>Pseudomonadati</taxon>
        <taxon>Pseudomonadota</taxon>
        <taxon>Gammaproteobacteria</taxon>
        <taxon>Vibrionales</taxon>
        <taxon>Vibrionaceae</taxon>
        <taxon>Vibrio</taxon>
    </lineage>
</organism>
<dbReference type="EC" id="2.3.1.275" evidence="1"/>
<dbReference type="EMBL" id="CP000627">
    <property type="protein sequence ID" value="ABQ20470.1"/>
    <property type="molecule type" value="Genomic_DNA"/>
</dbReference>
<dbReference type="EMBL" id="CP001235">
    <property type="protein sequence ID" value="ACP08559.1"/>
    <property type="molecule type" value="Genomic_DNA"/>
</dbReference>
<dbReference type="RefSeq" id="WP_000188027.1">
    <property type="nucleotide sequence ID" value="NZ_JAACZH010000029.1"/>
</dbReference>
<dbReference type="SMR" id="A5F9D1"/>
<dbReference type="KEGG" id="vco:VC0395_A0051"/>
<dbReference type="KEGG" id="vcr:VC395_0540"/>
<dbReference type="PATRIC" id="fig|345073.21.peg.530"/>
<dbReference type="eggNOG" id="COG0344">
    <property type="taxonomic scope" value="Bacteria"/>
</dbReference>
<dbReference type="HOGENOM" id="CLU_081254_0_2_6"/>
<dbReference type="OrthoDB" id="9777124at2"/>
<dbReference type="UniPathway" id="UPA00085"/>
<dbReference type="Proteomes" id="UP000000249">
    <property type="component" value="Chromosome 2"/>
</dbReference>
<dbReference type="GO" id="GO:0005886">
    <property type="term" value="C:plasma membrane"/>
    <property type="evidence" value="ECO:0007669"/>
    <property type="project" value="UniProtKB-SubCell"/>
</dbReference>
<dbReference type="GO" id="GO:0043772">
    <property type="term" value="F:acyl-phosphate glycerol-3-phosphate acyltransferase activity"/>
    <property type="evidence" value="ECO:0007669"/>
    <property type="project" value="UniProtKB-UniRule"/>
</dbReference>
<dbReference type="GO" id="GO:0008654">
    <property type="term" value="P:phospholipid biosynthetic process"/>
    <property type="evidence" value="ECO:0007669"/>
    <property type="project" value="UniProtKB-UniRule"/>
</dbReference>
<dbReference type="HAMAP" id="MF_01043">
    <property type="entry name" value="PlsY"/>
    <property type="match status" value="1"/>
</dbReference>
<dbReference type="InterPro" id="IPR003811">
    <property type="entry name" value="G3P_acylTferase_PlsY"/>
</dbReference>
<dbReference type="NCBIfam" id="TIGR00023">
    <property type="entry name" value="glycerol-3-phosphate 1-O-acyltransferase PlsY"/>
    <property type="match status" value="1"/>
</dbReference>
<dbReference type="PANTHER" id="PTHR30309:SF0">
    <property type="entry name" value="GLYCEROL-3-PHOSPHATE ACYLTRANSFERASE-RELATED"/>
    <property type="match status" value="1"/>
</dbReference>
<dbReference type="PANTHER" id="PTHR30309">
    <property type="entry name" value="INNER MEMBRANE PROTEIN YGIH"/>
    <property type="match status" value="1"/>
</dbReference>
<dbReference type="Pfam" id="PF02660">
    <property type="entry name" value="G3P_acyltransf"/>
    <property type="match status" value="1"/>
</dbReference>
<dbReference type="SMART" id="SM01207">
    <property type="entry name" value="G3P_acyltransf"/>
    <property type="match status" value="1"/>
</dbReference>
<feature type="chain" id="PRO_1000072990" description="Glycerol-3-phosphate acyltransferase">
    <location>
        <begin position="1"/>
        <end position="208"/>
    </location>
</feature>
<feature type="transmembrane region" description="Helical" evidence="1">
    <location>
        <begin position="4"/>
        <end position="24"/>
    </location>
</feature>
<feature type="transmembrane region" description="Helical" evidence="1">
    <location>
        <begin position="56"/>
        <end position="76"/>
    </location>
</feature>
<feature type="transmembrane region" description="Helical" evidence="1">
    <location>
        <begin position="80"/>
        <end position="100"/>
    </location>
</feature>
<feature type="transmembrane region" description="Helical" evidence="1">
    <location>
        <begin position="117"/>
        <end position="137"/>
    </location>
</feature>
<feature type="transmembrane region" description="Helical" evidence="1">
    <location>
        <begin position="139"/>
        <end position="159"/>
    </location>
</feature>
<protein>
    <recommendedName>
        <fullName evidence="1">Glycerol-3-phosphate acyltransferase</fullName>
    </recommendedName>
    <alternativeName>
        <fullName evidence="1">Acyl-PO4 G3P acyltransferase</fullName>
    </alternativeName>
    <alternativeName>
        <fullName evidence="1">Acyl-phosphate--glycerol-3-phosphate acyltransferase</fullName>
    </alternativeName>
    <alternativeName>
        <fullName evidence="1">G3P acyltransferase</fullName>
        <shortName evidence="1">GPAT</shortName>
        <ecNumber evidence="1">2.3.1.275</ecNumber>
    </alternativeName>
    <alternativeName>
        <fullName evidence="1">Lysophosphatidic acid synthase</fullName>
        <shortName evidence="1">LPA synthase</shortName>
    </alternativeName>
</protein>
<evidence type="ECO:0000255" key="1">
    <source>
        <dbReference type="HAMAP-Rule" id="MF_01043"/>
    </source>
</evidence>
<sequence length="208" mass="22476">MTPLALSMIIFAYLLGSISSAVLICRVLRLPDPRNVGSQNPGATNVLRIGGKKAAVAVLLCDMLKGTIPVWGGYFLNIEPFMLGLVAIAACLGHMYPIFFHFKGGKGVATALGAIAPIGLDLTAMVMATWLVVVVLFRYSSLAALVTVLLAPLYTWLIKPQYTLPVAMLCCLIVLRHHQNVKRLFAGTEPKVGEKNKKPSDDEESRVV</sequence>
<proteinExistence type="inferred from homology"/>
<accession>A5F9D1</accession>
<accession>C3LX49</accession>
<name>PLSY_VIBC3</name>
<keyword id="KW-0997">Cell inner membrane</keyword>
<keyword id="KW-1003">Cell membrane</keyword>
<keyword id="KW-0444">Lipid biosynthesis</keyword>
<keyword id="KW-0443">Lipid metabolism</keyword>
<keyword id="KW-0472">Membrane</keyword>
<keyword id="KW-0594">Phospholipid biosynthesis</keyword>
<keyword id="KW-1208">Phospholipid metabolism</keyword>
<keyword id="KW-0808">Transferase</keyword>
<keyword id="KW-0812">Transmembrane</keyword>
<keyword id="KW-1133">Transmembrane helix</keyword>
<reference key="1">
    <citation type="submission" date="2007-03" db="EMBL/GenBank/DDBJ databases">
        <authorList>
            <person name="Heidelberg J."/>
        </authorList>
    </citation>
    <scope>NUCLEOTIDE SEQUENCE [LARGE SCALE GENOMIC DNA]</scope>
    <source>
        <strain>ATCC 39541 / Classical Ogawa 395 / O395</strain>
    </source>
</reference>
<reference key="2">
    <citation type="journal article" date="2008" name="PLoS ONE">
        <title>A recalibrated molecular clock and independent origins for the cholera pandemic clones.</title>
        <authorList>
            <person name="Feng L."/>
            <person name="Reeves P.R."/>
            <person name="Lan R."/>
            <person name="Ren Y."/>
            <person name="Gao C."/>
            <person name="Zhou Z."/>
            <person name="Ren Y."/>
            <person name="Cheng J."/>
            <person name="Wang W."/>
            <person name="Wang J."/>
            <person name="Qian W."/>
            <person name="Li D."/>
            <person name="Wang L."/>
        </authorList>
    </citation>
    <scope>NUCLEOTIDE SEQUENCE [LARGE SCALE GENOMIC DNA]</scope>
    <source>
        <strain>ATCC 39541 / Classical Ogawa 395 / O395</strain>
    </source>
</reference>
<gene>
    <name evidence="1" type="primary">plsY</name>
    <name type="ordered locus">VC0395_A0051</name>
    <name type="ordered locus">VC395_0540</name>
</gene>